<organism>
    <name type="scientific">Brucella abortus (strain 2308)</name>
    <dbReference type="NCBI Taxonomy" id="359391"/>
    <lineage>
        <taxon>Bacteria</taxon>
        <taxon>Pseudomonadati</taxon>
        <taxon>Pseudomonadota</taxon>
        <taxon>Alphaproteobacteria</taxon>
        <taxon>Hyphomicrobiales</taxon>
        <taxon>Brucellaceae</taxon>
        <taxon>Brucella/Ochrobactrum group</taxon>
        <taxon>Brucella</taxon>
    </lineage>
</organism>
<sequence>MSQFTLADLERIVAERASVTDGTSYTASLVAKGQPKAAQKLGEEAVETVIAAVSGDRAGVVSESADLLYHLAVVWNIAGVALEDVLQELQRRTAQTGLAEKASRPKG</sequence>
<evidence type="ECO:0000255" key="1">
    <source>
        <dbReference type="HAMAP-Rule" id="MF_01020"/>
    </source>
</evidence>
<gene>
    <name evidence="1" type="primary">hisE</name>
    <name type="ordered locus">BAB1_2087</name>
</gene>
<keyword id="KW-0028">Amino-acid biosynthesis</keyword>
<keyword id="KW-0067">ATP-binding</keyword>
<keyword id="KW-0963">Cytoplasm</keyword>
<keyword id="KW-0368">Histidine biosynthesis</keyword>
<keyword id="KW-0378">Hydrolase</keyword>
<keyword id="KW-0547">Nucleotide-binding</keyword>
<keyword id="KW-1185">Reference proteome</keyword>
<accession>Q2YQY7</accession>
<protein>
    <recommendedName>
        <fullName evidence="1">Phosphoribosyl-ATP pyrophosphatase</fullName>
        <shortName evidence="1">PRA-PH</shortName>
        <ecNumber evidence="1">3.6.1.31</ecNumber>
    </recommendedName>
</protein>
<comment type="catalytic activity">
    <reaction evidence="1">
        <text>1-(5-phospho-beta-D-ribosyl)-ATP + H2O = 1-(5-phospho-beta-D-ribosyl)-5'-AMP + diphosphate + H(+)</text>
        <dbReference type="Rhea" id="RHEA:22828"/>
        <dbReference type="ChEBI" id="CHEBI:15377"/>
        <dbReference type="ChEBI" id="CHEBI:15378"/>
        <dbReference type="ChEBI" id="CHEBI:33019"/>
        <dbReference type="ChEBI" id="CHEBI:59457"/>
        <dbReference type="ChEBI" id="CHEBI:73183"/>
        <dbReference type="EC" id="3.6.1.31"/>
    </reaction>
</comment>
<comment type="pathway">
    <text evidence="1">Amino-acid biosynthesis; L-histidine biosynthesis; L-histidine from 5-phospho-alpha-D-ribose 1-diphosphate: step 2/9.</text>
</comment>
<comment type="subcellular location">
    <subcellularLocation>
        <location evidence="1">Cytoplasm</location>
    </subcellularLocation>
</comment>
<comment type="similarity">
    <text evidence="1">Belongs to the PRA-PH family.</text>
</comment>
<dbReference type="EC" id="3.6.1.31" evidence="1"/>
<dbReference type="EMBL" id="AM040264">
    <property type="protein sequence ID" value="CAJ12043.1"/>
    <property type="molecule type" value="Genomic_DNA"/>
</dbReference>
<dbReference type="RefSeq" id="WP_002965152.1">
    <property type="nucleotide sequence ID" value="NZ_KN046823.1"/>
</dbReference>
<dbReference type="SMR" id="Q2YQY7"/>
<dbReference type="STRING" id="359391.BAB1_2087"/>
<dbReference type="KEGG" id="bmf:BAB1_2087"/>
<dbReference type="PATRIC" id="fig|359391.11.peg.1321"/>
<dbReference type="HOGENOM" id="CLU_123337_1_1_5"/>
<dbReference type="PhylomeDB" id="Q2YQY7"/>
<dbReference type="UniPathway" id="UPA00031">
    <property type="reaction ID" value="UER00007"/>
</dbReference>
<dbReference type="Proteomes" id="UP000002719">
    <property type="component" value="Chromosome I"/>
</dbReference>
<dbReference type="GO" id="GO:0005737">
    <property type="term" value="C:cytoplasm"/>
    <property type="evidence" value="ECO:0007669"/>
    <property type="project" value="UniProtKB-SubCell"/>
</dbReference>
<dbReference type="GO" id="GO:0005524">
    <property type="term" value="F:ATP binding"/>
    <property type="evidence" value="ECO:0007669"/>
    <property type="project" value="UniProtKB-KW"/>
</dbReference>
<dbReference type="GO" id="GO:0004636">
    <property type="term" value="F:phosphoribosyl-ATP diphosphatase activity"/>
    <property type="evidence" value="ECO:0007669"/>
    <property type="project" value="UniProtKB-UniRule"/>
</dbReference>
<dbReference type="GO" id="GO:0000105">
    <property type="term" value="P:L-histidine biosynthetic process"/>
    <property type="evidence" value="ECO:0007669"/>
    <property type="project" value="UniProtKB-UniRule"/>
</dbReference>
<dbReference type="CDD" id="cd11534">
    <property type="entry name" value="NTP-PPase_HisIE_like"/>
    <property type="match status" value="1"/>
</dbReference>
<dbReference type="Gene3D" id="1.10.287.1080">
    <property type="entry name" value="MazG-like"/>
    <property type="match status" value="1"/>
</dbReference>
<dbReference type="HAMAP" id="MF_01020">
    <property type="entry name" value="HisE"/>
    <property type="match status" value="1"/>
</dbReference>
<dbReference type="InterPro" id="IPR008179">
    <property type="entry name" value="HisE"/>
</dbReference>
<dbReference type="InterPro" id="IPR021130">
    <property type="entry name" value="PRib-ATP_PPHydrolase-like"/>
</dbReference>
<dbReference type="NCBIfam" id="TIGR03188">
    <property type="entry name" value="histidine_hisI"/>
    <property type="match status" value="1"/>
</dbReference>
<dbReference type="NCBIfam" id="NF001613">
    <property type="entry name" value="PRK00400.1-5"/>
    <property type="match status" value="1"/>
</dbReference>
<dbReference type="PANTHER" id="PTHR42945">
    <property type="entry name" value="HISTIDINE BIOSYNTHESIS BIFUNCTIONAL PROTEIN"/>
    <property type="match status" value="1"/>
</dbReference>
<dbReference type="PANTHER" id="PTHR42945:SF9">
    <property type="entry name" value="HISTIDINE BIOSYNTHESIS BIFUNCTIONAL PROTEIN HISIE"/>
    <property type="match status" value="1"/>
</dbReference>
<dbReference type="Pfam" id="PF01503">
    <property type="entry name" value="PRA-PH"/>
    <property type="match status" value="1"/>
</dbReference>
<dbReference type="SUPFAM" id="SSF101386">
    <property type="entry name" value="all-alpha NTP pyrophosphatases"/>
    <property type="match status" value="1"/>
</dbReference>
<name>HIS2_BRUA2</name>
<feature type="chain" id="PRO_0000230169" description="Phosphoribosyl-ATP pyrophosphatase">
    <location>
        <begin position="1"/>
        <end position="107"/>
    </location>
</feature>
<reference key="1">
    <citation type="journal article" date="2005" name="Infect. Immun.">
        <title>Whole-genome analyses of speciation events in pathogenic Brucellae.</title>
        <authorList>
            <person name="Chain P.S."/>
            <person name="Comerci D.J."/>
            <person name="Tolmasky M.E."/>
            <person name="Larimer F.W."/>
            <person name="Malfatti S.A."/>
            <person name="Vergez L.M."/>
            <person name="Aguero F."/>
            <person name="Land M.L."/>
            <person name="Ugalde R.A."/>
            <person name="Garcia E."/>
        </authorList>
    </citation>
    <scope>NUCLEOTIDE SEQUENCE [LARGE SCALE GENOMIC DNA]</scope>
    <source>
        <strain>2308</strain>
    </source>
</reference>
<proteinExistence type="inferred from homology"/>